<gene>
    <name evidence="1" type="primary">eno</name>
    <name type="ordered locus">BARBAKC583_0532</name>
</gene>
<dbReference type="EC" id="4.2.1.11" evidence="1"/>
<dbReference type="EMBL" id="CP000524">
    <property type="protein sequence ID" value="ABM44895.1"/>
    <property type="molecule type" value="Genomic_DNA"/>
</dbReference>
<dbReference type="RefSeq" id="WP_005766659.1">
    <property type="nucleotide sequence ID" value="NC_008783.1"/>
</dbReference>
<dbReference type="SMR" id="A1US94"/>
<dbReference type="STRING" id="360095.BARBAKC583_0532"/>
<dbReference type="GeneID" id="4683960"/>
<dbReference type="KEGG" id="bbk:BARBAKC583_0532"/>
<dbReference type="PATRIC" id="fig|360095.6.peg.516"/>
<dbReference type="eggNOG" id="COG0148">
    <property type="taxonomic scope" value="Bacteria"/>
</dbReference>
<dbReference type="HOGENOM" id="CLU_031223_2_1_5"/>
<dbReference type="OrthoDB" id="9804716at2"/>
<dbReference type="UniPathway" id="UPA00109">
    <property type="reaction ID" value="UER00187"/>
</dbReference>
<dbReference type="Proteomes" id="UP000000643">
    <property type="component" value="Chromosome"/>
</dbReference>
<dbReference type="GO" id="GO:0009986">
    <property type="term" value="C:cell surface"/>
    <property type="evidence" value="ECO:0007669"/>
    <property type="project" value="UniProtKB-SubCell"/>
</dbReference>
<dbReference type="GO" id="GO:0005576">
    <property type="term" value="C:extracellular region"/>
    <property type="evidence" value="ECO:0007669"/>
    <property type="project" value="UniProtKB-SubCell"/>
</dbReference>
<dbReference type="GO" id="GO:0000015">
    <property type="term" value="C:phosphopyruvate hydratase complex"/>
    <property type="evidence" value="ECO:0007669"/>
    <property type="project" value="InterPro"/>
</dbReference>
<dbReference type="GO" id="GO:0000287">
    <property type="term" value="F:magnesium ion binding"/>
    <property type="evidence" value="ECO:0007669"/>
    <property type="project" value="UniProtKB-UniRule"/>
</dbReference>
<dbReference type="GO" id="GO:0004634">
    <property type="term" value="F:phosphopyruvate hydratase activity"/>
    <property type="evidence" value="ECO:0007669"/>
    <property type="project" value="UniProtKB-UniRule"/>
</dbReference>
<dbReference type="GO" id="GO:0006096">
    <property type="term" value="P:glycolytic process"/>
    <property type="evidence" value="ECO:0007669"/>
    <property type="project" value="UniProtKB-UniRule"/>
</dbReference>
<dbReference type="CDD" id="cd03313">
    <property type="entry name" value="enolase"/>
    <property type="match status" value="1"/>
</dbReference>
<dbReference type="FunFam" id="3.20.20.120:FF:000001">
    <property type="entry name" value="Enolase"/>
    <property type="match status" value="1"/>
</dbReference>
<dbReference type="FunFam" id="3.30.390.10:FF:000001">
    <property type="entry name" value="Enolase"/>
    <property type="match status" value="1"/>
</dbReference>
<dbReference type="Gene3D" id="3.20.20.120">
    <property type="entry name" value="Enolase-like C-terminal domain"/>
    <property type="match status" value="1"/>
</dbReference>
<dbReference type="Gene3D" id="3.30.390.10">
    <property type="entry name" value="Enolase-like, N-terminal domain"/>
    <property type="match status" value="1"/>
</dbReference>
<dbReference type="HAMAP" id="MF_00318">
    <property type="entry name" value="Enolase"/>
    <property type="match status" value="1"/>
</dbReference>
<dbReference type="InterPro" id="IPR000941">
    <property type="entry name" value="Enolase"/>
</dbReference>
<dbReference type="InterPro" id="IPR036849">
    <property type="entry name" value="Enolase-like_C_sf"/>
</dbReference>
<dbReference type="InterPro" id="IPR029017">
    <property type="entry name" value="Enolase-like_N"/>
</dbReference>
<dbReference type="InterPro" id="IPR020810">
    <property type="entry name" value="Enolase_C"/>
</dbReference>
<dbReference type="InterPro" id="IPR020809">
    <property type="entry name" value="Enolase_CS"/>
</dbReference>
<dbReference type="InterPro" id="IPR020811">
    <property type="entry name" value="Enolase_N"/>
</dbReference>
<dbReference type="NCBIfam" id="TIGR01060">
    <property type="entry name" value="eno"/>
    <property type="match status" value="1"/>
</dbReference>
<dbReference type="PANTHER" id="PTHR11902">
    <property type="entry name" value="ENOLASE"/>
    <property type="match status" value="1"/>
</dbReference>
<dbReference type="PANTHER" id="PTHR11902:SF1">
    <property type="entry name" value="ENOLASE"/>
    <property type="match status" value="1"/>
</dbReference>
<dbReference type="Pfam" id="PF00113">
    <property type="entry name" value="Enolase_C"/>
    <property type="match status" value="1"/>
</dbReference>
<dbReference type="Pfam" id="PF03952">
    <property type="entry name" value="Enolase_N"/>
    <property type="match status" value="1"/>
</dbReference>
<dbReference type="PIRSF" id="PIRSF001400">
    <property type="entry name" value="Enolase"/>
    <property type="match status" value="1"/>
</dbReference>
<dbReference type="PRINTS" id="PR00148">
    <property type="entry name" value="ENOLASE"/>
</dbReference>
<dbReference type="SFLD" id="SFLDS00001">
    <property type="entry name" value="Enolase"/>
    <property type="match status" value="1"/>
</dbReference>
<dbReference type="SFLD" id="SFLDF00002">
    <property type="entry name" value="enolase"/>
    <property type="match status" value="1"/>
</dbReference>
<dbReference type="SMART" id="SM01192">
    <property type="entry name" value="Enolase_C"/>
    <property type="match status" value="1"/>
</dbReference>
<dbReference type="SMART" id="SM01193">
    <property type="entry name" value="Enolase_N"/>
    <property type="match status" value="1"/>
</dbReference>
<dbReference type="SUPFAM" id="SSF51604">
    <property type="entry name" value="Enolase C-terminal domain-like"/>
    <property type="match status" value="1"/>
</dbReference>
<dbReference type="SUPFAM" id="SSF54826">
    <property type="entry name" value="Enolase N-terminal domain-like"/>
    <property type="match status" value="1"/>
</dbReference>
<dbReference type="PROSITE" id="PS00164">
    <property type="entry name" value="ENOLASE"/>
    <property type="match status" value="1"/>
</dbReference>
<feature type="chain" id="PRO_1000019187" description="Enolase">
    <location>
        <begin position="1"/>
        <end position="423"/>
    </location>
</feature>
<feature type="active site" description="Proton donor" evidence="1">
    <location>
        <position position="204"/>
    </location>
</feature>
<feature type="active site" description="Proton acceptor" evidence="1">
    <location>
        <position position="336"/>
    </location>
</feature>
<feature type="binding site" evidence="1">
    <location>
        <position position="162"/>
    </location>
    <ligand>
        <name>(2R)-2-phosphoglycerate</name>
        <dbReference type="ChEBI" id="CHEBI:58289"/>
    </ligand>
</feature>
<feature type="binding site" evidence="1">
    <location>
        <position position="241"/>
    </location>
    <ligand>
        <name>Mg(2+)</name>
        <dbReference type="ChEBI" id="CHEBI:18420"/>
    </ligand>
</feature>
<feature type="binding site" evidence="1">
    <location>
        <position position="284"/>
    </location>
    <ligand>
        <name>Mg(2+)</name>
        <dbReference type="ChEBI" id="CHEBI:18420"/>
    </ligand>
</feature>
<feature type="binding site" evidence="1">
    <location>
        <position position="311"/>
    </location>
    <ligand>
        <name>Mg(2+)</name>
        <dbReference type="ChEBI" id="CHEBI:18420"/>
    </ligand>
</feature>
<feature type="binding site" evidence="1">
    <location>
        <position position="336"/>
    </location>
    <ligand>
        <name>(2R)-2-phosphoglycerate</name>
        <dbReference type="ChEBI" id="CHEBI:58289"/>
    </ligand>
</feature>
<feature type="binding site" evidence="1">
    <location>
        <position position="365"/>
    </location>
    <ligand>
        <name>(2R)-2-phosphoglycerate</name>
        <dbReference type="ChEBI" id="CHEBI:58289"/>
    </ligand>
</feature>
<feature type="binding site" evidence="1">
    <location>
        <position position="366"/>
    </location>
    <ligand>
        <name>(2R)-2-phosphoglycerate</name>
        <dbReference type="ChEBI" id="CHEBI:58289"/>
    </ligand>
</feature>
<feature type="binding site" evidence="1">
    <location>
        <position position="387"/>
    </location>
    <ligand>
        <name>(2R)-2-phosphoglycerate</name>
        <dbReference type="ChEBI" id="CHEBI:58289"/>
    </ligand>
</feature>
<organism>
    <name type="scientific">Bartonella bacilliformis (strain ATCC 35685 / KC583 / Herrer 020/F12,63)</name>
    <dbReference type="NCBI Taxonomy" id="360095"/>
    <lineage>
        <taxon>Bacteria</taxon>
        <taxon>Pseudomonadati</taxon>
        <taxon>Pseudomonadota</taxon>
        <taxon>Alphaproteobacteria</taxon>
        <taxon>Hyphomicrobiales</taxon>
        <taxon>Bartonellaceae</taxon>
        <taxon>Bartonella</taxon>
    </lineage>
</organism>
<proteinExistence type="inferred from homology"/>
<accession>A1US94</accession>
<sequence length="423" mass="45873">MTRIVDIVGREVLDSRGNPTVEVDVYLENGVFGRSAVPSGASTGAHEAVELRDGGKRYQGKGVEKAVAAINGEIFKELGGRDARNQLAIDQAMIALDGTSNKERLGANAILGVSLSVAKAAAKSFGLPLYRYIGGTQAHLLPTPMMNIINGGAHADNPIDFQEFMIIPVGAPTFKEAVRYGAEIFHTLKRYLQDAGYNTNVGDEGGFAPNLKSAEQAINLIMESITSCGYKPGEQIAIGLDCASTEFYKNSLYAYEGEGKCRDVKEQVEYLAHLVDSYPIITIEDGMAEDDWAGWKQLTQAIGNKCQLVGDDLFVTNSARLRDGIKMGAANSILIKVNQIGTLSETLDAIETAHKAGYRAIISHRSGETEDSFIADLTVATNCGQIKTGSLARSDRLAKYNQLIRIEEMLGTQARYEGNWHRR</sequence>
<comment type="function">
    <text evidence="1">Catalyzes the reversible conversion of 2-phosphoglycerate (2-PG) into phosphoenolpyruvate (PEP). It is essential for the degradation of carbohydrates via glycolysis.</text>
</comment>
<comment type="catalytic activity">
    <reaction evidence="1">
        <text>(2R)-2-phosphoglycerate = phosphoenolpyruvate + H2O</text>
        <dbReference type="Rhea" id="RHEA:10164"/>
        <dbReference type="ChEBI" id="CHEBI:15377"/>
        <dbReference type="ChEBI" id="CHEBI:58289"/>
        <dbReference type="ChEBI" id="CHEBI:58702"/>
        <dbReference type="EC" id="4.2.1.11"/>
    </reaction>
</comment>
<comment type="cofactor">
    <cofactor evidence="1">
        <name>Mg(2+)</name>
        <dbReference type="ChEBI" id="CHEBI:18420"/>
    </cofactor>
    <text evidence="1">Binds a second Mg(2+) ion via substrate during catalysis.</text>
</comment>
<comment type="pathway">
    <text evidence="1">Carbohydrate degradation; glycolysis; pyruvate from D-glyceraldehyde 3-phosphate: step 4/5.</text>
</comment>
<comment type="subcellular location">
    <subcellularLocation>
        <location evidence="1">Cytoplasm</location>
    </subcellularLocation>
    <subcellularLocation>
        <location evidence="1">Secreted</location>
    </subcellularLocation>
    <subcellularLocation>
        <location evidence="1">Cell surface</location>
    </subcellularLocation>
    <text evidence="1">Fractions of enolase are present in both the cytoplasm and on the cell surface.</text>
</comment>
<comment type="similarity">
    <text evidence="1">Belongs to the enolase family.</text>
</comment>
<name>ENO_BARBK</name>
<reference key="1">
    <citation type="submission" date="2006-12" db="EMBL/GenBank/DDBJ databases">
        <authorList>
            <person name="Hendrix L."/>
            <person name="Mohamoud Y."/>
            <person name="Radune D."/>
            <person name="Shvartsbeyn A."/>
            <person name="Daugherty S."/>
            <person name="Dodson R."/>
            <person name="Durkin A.S."/>
            <person name="Harkins D."/>
            <person name="Huot H."/>
            <person name="Kothari S.P."/>
            <person name="Madupu R."/>
            <person name="Li J."/>
            <person name="Nelson W.C."/>
            <person name="Shrivastava S."/>
            <person name="Giglio M.G."/>
            <person name="Haft D."/>
            <person name="Selengut J."/>
            <person name="Fraser-Ligget C."/>
            <person name="Seshadri R."/>
        </authorList>
    </citation>
    <scope>NUCLEOTIDE SEQUENCE [LARGE SCALE GENOMIC DNA]</scope>
    <source>
        <strain>ATCC 35685 / KC583 / Herrer 020/F12,63</strain>
    </source>
</reference>
<keyword id="KW-0963">Cytoplasm</keyword>
<keyword id="KW-0324">Glycolysis</keyword>
<keyword id="KW-0456">Lyase</keyword>
<keyword id="KW-0460">Magnesium</keyword>
<keyword id="KW-0479">Metal-binding</keyword>
<keyword id="KW-0964">Secreted</keyword>
<evidence type="ECO:0000255" key="1">
    <source>
        <dbReference type="HAMAP-Rule" id="MF_00318"/>
    </source>
</evidence>
<protein>
    <recommendedName>
        <fullName evidence="1">Enolase</fullName>
        <ecNumber evidence="1">4.2.1.11</ecNumber>
    </recommendedName>
    <alternativeName>
        <fullName evidence="1">2-phospho-D-glycerate hydro-lyase</fullName>
    </alternativeName>
    <alternativeName>
        <fullName evidence="1">2-phosphoglycerate dehydratase</fullName>
    </alternativeName>
</protein>